<organism>
    <name type="scientific">Rattus norvegicus</name>
    <name type="common">Rat</name>
    <dbReference type="NCBI Taxonomy" id="10116"/>
    <lineage>
        <taxon>Eukaryota</taxon>
        <taxon>Metazoa</taxon>
        <taxon>Chordata</taxon>
        <taxon>Craniata</taxon>
        <taxon>Vertebrata</taxon>
        <taxon>Euteleostomi</taxon>
        <taxon>Mammalia</taxon>
        <taxon>Eutheria</taxon>
        <taxon>Euarchontoglires</taxon>
        <taxon>Glires</taxon>
        <taxon>Rodentia</taxon>
        <taxon>Myomorpha</taxon>
        <taxon>Muroidea</taxon>
        <taxon>Muridae</taxon>
        <taxon>Murinae</taxon>
        <taxon>Rattus</taxon>
    </lineage>
</organism>
<proteinExistence type="evidence at protein level"/>
<dbReference type="EMBL" id="AABR03090012">
    <property type="status" value="NOT_ANNOTATED_CDS"/>
    <property type="molecule type" value="Genomic_DNA"/>
</dbReference>
<dbReference type="RefSeq" id="NP_001100687.1">
    <property type="nucleotide sequence ID" value="NM_001107217.1"/>
</dbReference>
<dbReference type="SMR" id="P68943"/>
<dbReference type="FunCoup" id="P68943">
    <property type="interactions" value="3615"/>
</dbReference>
<dbReference type="STRING" id="10116.ENSRNOP00000004912"/>
<dbReference type="PhosphoSitePlus" id="P68943"/>
<dbReference type="PaxDb" id="10116-ENSRNOP00000004912"/>
<dbReference type="Ensembl" id="ENSRNOT00000004912.6">
    <property type="protein sequence ID" value="ENSRNOP00000004912.4"/>
    <property type="gene ID" value="ENSRNOG00000003592.6"/>
</dbReference>
<dbReference type="GeneID" id="305391"/>
<dbReference type="KEGG" id="rno:305391"/>
<dbReference type="AGR" id="RGD:1305875"/>
<dbReference type="CTD" id="80306"/>
<dbReference type="RGD" id="1305875">
    <property type="gene designation" value="Med28"/>
</dbReference>
<dbReference type="eggNOG" id="ENOG502QSN9">
    <property type="taxonomic scope" value="Eukaryota"/>
</dbReference>
<dbReference type="GeneTree" id="ENSGT00390000006192"/>
<dbReference type="HOGENOM" id="CLU_129063_0_0_1"/>
<dbReference type="InParanoid" id="P68943"/>
<dbReference type="OMA" id="MQPSPQH"/>
<dbReference type="OrthoDB" id="2286203at2759"/>
<dbReference type="PhylomeDB" id="P68943"/>
<dbReference type="TreeFam" id="TF326988"/>
<dbReference type="PRO" id="PR:P68943"/>
<dbReference type="Proteomes" id="UP000002494">
    <property type="component" value="Chromosome 14"/>
</dbReference>
<dbReference type="Bgee" id="ENSRNOG00000003592">
    <property type="expression patterns" value="Expressed in testis and 20 other cell types or tissues"/>
</dbReference>
<dbReference type="GO" id="GO:0070847">
    <property type="term" value="C:core mediator complex"/>
    <property type="evidence" value="ECO:0000266"/>
    <property type="project" value="RGD"/>
</dbReference>
<dbReference type="GO" id="GO:0030864">
    <property type="term" value="C:cortical actin cytoskeleton"/>
    <property type="evidence" value="ECO:0000266"/>
    <property type="project" value="RGD"/>
</dbReference>
<dbReference type="GO" id="GO:0005856">
    <property type="term" value="C:cytoskeleton"/>
    <property type="evidence" value="ECO:0000266"/>
    <property type="project" value="RGD"/>
</dbReference>
<dbReference type="GO" id="GO:0016592">
    <property type="term" value="C:mediator complex"/>
    <property type="evidence" value="ECO:0000318"/>
    <property type="project" value="GO_Central"/>
</dbReference>
<dbReference type="GO" id="GO:0016020">
    <property type="term" value="C:membrane"/>
    <property type="evidence" value="ECO:0007669"/>
    <property type="project" value="UniProtKB-SubCell"/>
</dbReference>
<dbReference type="GO" id="GO:0005654">
    <property type="term" value="C:nucleoplasm"/>
    <property type="evidence" value="ECO:0007669"/>
    <property type="project" value="Ensembl"/>
</dbReference>
<dbReference type="GO" id="GO:0005634">
    <property type="term" value="C:nucleus"/>
    <property type="evidence" value="ECO:0000266"/>
    <property type="project" value="RGD"/>
</dbReference>
<dbReference type="GO" id="GO:0003779">
    <property type="term" value="F:actin binding"/>
    <property type="evidence" value="ECO:0007669"/>
    <property type="project" value="UniProtKB-KW"/>
</dbReference>
<dbReference type="GO" id="GO:0051151">
    <property type="term" value="P:negative regulation of smooth muscle cell differentiation"/>
    <property type="evidence" value="ECO:0000266"/>
    <property type="project" value="RGD"/>
</dbReference>
<dbReference type="GO" id="GO:0035019">
    <property type="term" value="P:somatic stem cell population maintenance"/>
    <property type="evidence" value="ECO:0000266"/>
    <property type="project" value="RGD"/>
</dbReference>
<dbReference type="InterPro" id="IPR021640">
    <property type="entry name" value="Mediator_Med28"/>
</dbReference>
<dbReference type="PANTHER" id="PTHR13512">
    <property type="entry name" value="MEDIATOR COMPLEX SUBUNIT 28"/>
    <property type="match status" value="1"/>
</dbReference>
<dbReference type="PANTHER" id="PTHR13512:SF2">
    <property type="entry name" value="MEDIATOR OF RNA POLYMERASE II TRANSCRIPTION SUBUNIT 28"/>
    <property type="match status" value="1"/>
</dbReference>
<dbReference type="Pfam" id="PF11594">
    <property type="entry name" value="Med28"/>
    <property type="match status" value="1"/>
</dbReference>
<feature type="chain" id="PRO_0000113983" description="Mediator of RNA polymerase II transcription subunit 28">
    <location>
        <begin position="1"/>
        <end position="178"/>
    </location>
</feature>
<feature type="region of interest" description="Disordered" evidence="3">
    <location>
        <begin position="1"/>
        <end position="43"/>
    </location>
</feature>
<feature type="coiled-coil region" evidence="2">
    <location>
        <begin position="109"/>
        <end position="145"/>
    </location>
</feature>
<feature type="compositionally biased region" description="Pro residues" evidence="3">
    <location>
        <begin position="13"/>
        <end position="23"/>
    </location>
</feature>
<reference key="1">
    <citation type="journal article" date="2004" name="Nature">
        <title>Genome sequence of the Brown Norway rat yields insights into mammalian evolution.</title>
        <authorList>
            <person name="Gibbs R.A."/>
            <person name="Weinstock G.M."/>
            <person name="Metzker M.L."/>
            <person name="Muzny D.M."/>
            <person name="Sodergren E.J."/>
            <person name="Scherer S."/>
            <person name="Scott G."/>
            <person name="Steffen D."/>
            <person name="Worley K.C."/>
            <person name="Burch P.E."/>
            <person name="Okwuonu G."/>
            <person name="Hines S."/>
            <person name="Lewis L."/>
            <person name="Deramo C."/>
            <person name="Delgado O."/>
            <person name="Dugan-Rocha S."/>
            <person name="Miner G."/>
            <person name="Morgan M."/>
            <person name="Hawes A."/>
            <person name="Gill R."/>
            <person name="Holt R.A."/>
            <person name="Adams M.D."/>
            <person name="Amanatides P.G."/>
            <person name="Baden-Tillson H."/>
            <person name="Barnstead M."/>
            <person name="Chin S."/>
            <person name="Evans C.A."/>
            <person name="Ferriera S."/>
            <person name="Fosler C."/>
            <person name="Glodek A."/>
            <person name="Gu Z."/>
            <person name="Jennings D."/>
            <person name="Kraft C.L."/>
            <person name="Nguyen T."/>
            <person name="Pfannkoch C.M."/>
            <person name="Sitter C."/>
            <person name="Sutton G.G."/>
            <person name="Venter J.C."/>
            <person name="Woodage T."/>
            <person name="Smith D."/>
            <person name="Lee H.-M."/>
            <person name="Gustafson E."/>
            <person name="Cahill P."/>
            <person name="Kana A."/>
            <person name="Doucette-Stamm L."/>
            <person name="Weinstock K."/>
            <person name="Fechtel K."/>
            <person name="Weiss R.B."/>
            <person name="Dunn D.M."/>
            <person name="Green E.D."/>
            <person name="Blakesley R.W."/>
            <person name="Bouffard G.G."/>
            <person name="De Jong P.J."/>
            <person name="Osoegawa K."/>
            <person name="Zhu B."/>
            <person name="Marra M."/>
            <person name="Schein J."/>
            <person name="Bosdet I."/>
            <person name="Fjell C."/>
            <person name="Jones S."/>
            <person name="Krzywinski M."/>
            <person name="Mathewson C."/>
            <person name="Siddiqui A."/>
            <person name="Wye N."/>
            <person name="McPherson J."/>
            <person name="Zhao S."/>
            <person name="Fraser C.M."/>
            <person name="Shetty J."/>
            <person name="Shatsman S."/>
            <person name="Geer K."/>
            <person name="Chen Y."/>
            <person name="Abramzon S."/>
            <person name="Nierman W.C."/>
            <person name="Havlak P.H."/>
            <person name="Chen R."/>
            <person name="Durbin K.J."/>
            <person name="Egan A."/>
            <person name="Ren Y."/>
            <person name="Song X.-Z."/>
            <person name="Li B."/>
            <person name="Liu Y."/>
            <person name="Qin X."/>
            <person name="Cawley S."/>
            <person name="Cooney A.J."/>
            <person name="D'Souza L.M."/>
            <person name="Martin K."/>
            <person name="Wu J.Q."/>
            <person name="Gonzalez-Garay M.L."/>
            <person name="Jackson A.R."/>
            <person name="Kalafus K.J."/>
            <person name="McLeod M.P."/>
            <person name="Milosavljevic A."/>
            <person name="Virk D."/>
            <person name="Volkov A."/>
            <person name="Wheeler D.A."/>
            <person name="Zhang Z."/>
            <person name="Bailey J.A."/>
            <person name="Eichler E.E."/>
            <person name="Tuzun E."/>
            <person name="Birney E."/>
            <person name="Mongin E."/>
            <person name="Ureta-Vidal A."/>
            <person name="Woodwark C."/>
            <person name="Zdobnov E."/>
            <person name="Bork P."/>
            <person name="Suyama M."/>
            <person name="Torrents D."/>
            <person name="Alexandersson M."/>
            <person name="Trask B.J."/>
            <person name="Young J.M."/>
            <person name="Huang H."/>
            <person name="Wang H."/>
            <person name="Xing H."/>
            <person name="Daniels S."/>
            <person name="Gietzen D."/>
            <person name="Schmidt J."/>
            <person name="Stevens K."/>
            <person name="Vitt U."/>
            <person name="Wingrove J."/>
            <person name="Camara F."/>
            <person name="Mar Alba M."/>
            <person name="Abril J.F."/>
            <person name="Guigo R."/>
            <person name="Smit A."/>
            <person name="Dubchak I."/>
            <person name="Rubin E.M."/>
            <person name="Couronne O."/>
            <person name="Poliakov A."/>
            <person name="Huebner N."/>
            <person name="Ganten D."/>
            <person name="Goesele C."/>
            <person name="Hummel O."/>
            <person name="Kreitler T."/>
            <person name="Lee Y.-A."/>
            <person name="Monti J."/>
            <person name="Schulz H."/>
            <person name="Zimdahl H."/>
            <person name="Himmelbauer H."/>
            <person name="Lehrach H."/>
            <person name="Jacob H.J."/>
            <person name="Bromberg S."/>
            <person name="Gullings-Handley J."/>
            <person name="Jensen-Seaman M.I."/>
            <person name="Kwitek A.E."/>
            <person name="Lazar J."/>
            <person name="Pasko D."/>
            <person name="Tonellato P.J."/>
            <person name="Twigger S."/>
            <person name="Ponting C.P."/>
            <person name="Duarte J.M."/>
            <person name="Rice S."/>
            <person name="Goodstadt L."/>
            <person name="Beatson S.A."/>
            <person name="Emes R.D."/>
            <person name="Winter E.E."/>
            <person name="Webber C."/>
            <person name="Brandt P."/>
            <person name="Nyakatura G."/>
            <person name="Adetobi M."/>
            <person name="Chiaromonte F."/>
            <person name="Elnitski L."/>
            <person name="Eswara P."/>
            <person name="Hardison R.C."/>
            <person name="Hou M."/>
            <person name="Kolbe D."/>
            <person name="Makova K."/>
            <person name="Miller W."/>
            <person name="Nekrutenko A."/>
            <person name="Riemer C."/>
            <person name="Schwartz S."/>
            <person name="Taylor J."/>
            <person name="Yang S."/>
            <person name="Zhang Y."/>
            <person name="Lindpaintner K."/>
            <person name="Andrews T.D."/>
            <person name="Caccamo M."/>
            <person name="Clamp M."/>
            <person name="Clarke L."/>
            <person name="Curwen V."/>
            <person name="Durbin R.M."/>
            <person name="Eyras E."/>
            <person name="Searle S.M."/>
            <person name="Cooper G.M."/>
            <person name="Batzoglou S."/>
            <person name="Brudno M."/>
            <person name="Sidow A."/>
            <person name="Stone E.A."/>
            <person name="Payseur B.A."/>
            <person name="Bourque G."/>
            <person name="Lopez-Otin C."/>
            <person name="Puente X.S."/>
            <person name="Chakrabarti K."/>
            <person name="Chatterji S."/>
            <person name="Dewey C."/>
            <person name="Pachter L."/>
            <person name="Bray N."/>
            <person name="Yap V.B."/>
            <person name="Caspi A."/>
            <person name="Tesler G."/>
            <person name="Pevzner P.A."/>
            <person name="Haussler D."/>
            <person name="Roskin K.M."/>
            <person name="Baertsch R."/>
            <person name="Clawson H."/>
            <person name="Furey T.S."/>
            <person name="Hinrichs A.S."/>
            <person name="Karolchik D."/>
            <person name="Kent W.J."/>
            <person name="Rosenbloom K.R."/>
            <person name="Trumbower H."/>
            <person name="Weirauch M."/>
            <person name="Cooper D.N."/>
            <person name="Stenson P.D."/>
            <person name="Ma B."/>
            <person name="Brent M."/>
            <person name="Arumugam M."/>
            <person name="Shteynberg D."/>
            <person name="Copley R.R."/>
            <person name="Taylor M.S."/>
            <person name="Riethman H."/>
            <person name="Mudunuri U."/>
            <person name="Peterson J."/>
            <person name="Guyer M."/>
            <person name="Felsenfeld A."/>
            <person name="Old S."/>
            <person name="Mockrin S."/>
            <person name="Collins F.S."/>
        </authorList>
    </citation>
    <scope>NUCLEOTIDE SEQUENCE [LARGE SCALE GENOMIC DNA]</scope>
    <source>
        <strain>Brown Norway</strain>
    </source>
</reference>
<reference key="2">
    <citation type="journal article" date="2002" name="Proc. Natl. Acad. Sci. U.S.A.">
        <title>Mammalian mediator subunit mMED8 is an Elongin BC-interacting protein that can assemble with Cul2 and Rbx1 to reconstitute a ubiquitin ligase.</title>
        <authorList>
            <person name="Brower C.S."/>
            <person name="Sato S."/>
            <person name="Tomomori-Sato C."/>
            <person name="Kamura T."/>
            <person name="Pause A."/>
            <person name="Stearman R."/>
            <person name="Klausner R.D."/>
            <person name="Malik S."/>
            <person name="Lane W.S."/>
            <person name="Sorokina I."/>
            <person name="Roeder R.G."/>
            <person name="Conaway J.W."/>
            <person name="Conaway R.C."/>
        </authorList>
    </citation>
    <scope>IDENTIFICATION BY MASS SPECTROMETRY</scope>
    <scope>IDENTIFICATION IN THE MEDIATOR COMPLEX WITH CCNC; CDK8; MED1; MED6; MED7; MED10; MED12; MED17; MED21; MED24; MED27; MED28; USP47; MED30 AND MED31</scope>
</reference>
<sequence length="178" mass="19524">MAASLGGMFAGQPPGPPPPPPGLPGQASLLQAAPGAPRPSNSTLVDELESSFEACFASLVSQDYVNGTDQEEIRTGVDQCIQKFLDIARQTECFFLQKRLQLSVQKPDQVIKEDVSELRSELQRKDALVQKHLTKLRHWQQVLEDINVQHKKPADMPQGSLAYLEQASANIPAPLKQT</sequence>
<protein>
    <recommendedName>
        <fullName>Mediator of RNA polymerase II transcription subunit 28</fullName>
    </recommendedName>
    <alternativeName>
        <fullName>Mediator complex subunit 28</fullName>
    </alternativeName>
</protein>
<keyword id="KW-0009">Actin-binding</keyword>
<keyword id="KW-0010">Activator</keyword>
<keyword id="KW-0175">Coiled coil</keyword>
<keyword id="KW-0963">Cytoplasm</keyword>
<keyword id="KW-0472">Membrane</keyword>
<keyword id="KW-0539">Nucleus</keyword>
<keyword id="KW-1185">Reference proteome</keyword>
<keyword id="KW-0804">Transcription</keyword>
<keyword id="KW-0805">Transcription regulation</keyword>
<evidence type="ECO:0000250" key="1"/>
<evidence type="ECO:0000255" key="2"/>
<evidence type="ECO:0000256" key="3">
    <source>
        <dbReference type="SAM" id="MobiDB-lite"/>
    </source>
</evidence>
<evidence type="ECO:0000269" key="4">
    <source>
    </source>
</evidence>
<evidence type="ECO:0000305" key="5"/>
<accession>P68943</accession>
<gene>
    <name type="primary">Med28</name>
</gene>
<comment type="function">
    <text evidence="1">May be part of a complex containing NF2/merlin that participates in cellular signaling to the actin cytoskeleton downstream of tyrosine kinase signaling pathways (By similarity). Component of the Mediator complex, a coactivator involved in the regulated transcription of nearly all RNA polymerase II-dependent genes. Mediator functions as a bridge to convey information from gene-specific regulatory proteins to the basal RNA polymerase II transcription machinery. Mediator is recruited to promoters by direct interactions with regulatory proteins and serves as a scaffold for the assembly of a functional preinitiation complex with RNA polymerase II and the general transcription factors.</text>
</comment>
<comment type="subunit">
    <text evidence="1 4">Forms a ternary complex with NF2/merlin and GRB2. Binds to actin (By similarity). Component of the Mediator complex, which is probably composed of MED1, MED4, MED6, MED7, MED8, MED9, MED10, MED11, MED12, MED13, MED13L, MED14, MED15, MED16, MED17, MED18, MED19, MED20, MED21, MED22, MED23, MED24, MED25, MED26, MED27, MED29, MED30, MED31, CCNC, CDK8 and CDC2L6/CDK11. The MED12, MED13, CCNC and CDK8 subunits form a distinct module termed the CDK8 module. Mediator containing the CDK8 module is less active than Mediator lacking this module in supporting transcriptional activation. Individual preparations of the Mediator complex lacking one or more distinct subunits have been variously termed ARC, CRSP, DRIP, PC2, SMCC and TRAP.</text>
</comment>
<comment type="subcellular location">
    <subcellularLocation>
        <location evidence="1">Nucleus</location>
    </subcellularLocation>
    <subcellularLocation>
        <location evidence="1">Cytoplasm</location>
    </subcellularLocation>
    <subcellularLocation>
        <location evidence="1">Membrane</location>
    </subcellularLocation>
    <text evidence="1">May be also cytoplasmic and membrane-associated.</text>
</comment>
<comment type="similarity">
    <text evidence="5">Belongs to the Mediator complex subunit 28 family.</text>
</comment>
<name>MED28_RAT</name>